<name>AGUA1_LISMF</name>
<sequence>MRTIDSSSKKDGFRMPGEFEKHAGCYIIWPERPDNWRLGAKPAQKAFVDVATAISRFEPVTVVASSSQYVNARYMLPDEIRVVEMDNDDAWVRDSGPTFVVNDSGDVRGVDWSFNSWGGLVDGLYFPWDKDDQVAQKICELERKDRYRLADFVLEGGSIHVDGEGTLVTTEECLLSEGRNPQLSKQQIEMVLKEYLNLEKIIWLKRGIYLDETNGHVDNIFNYVRPGVVALAWTDDETDPQYEISKECFDILSNETDAKGRKLEVHKINVPKPILITDEESKGVDAVEGTLPREEGDRLAASYINYYTANGGVVFPLFGDPNDELAREKLRQLYPNCEVVGVKAREILLGGGNIHCITQQVPRG</sequence>
<keyword id="KW-0378">Hydrolase</keyword>
<proteinExistence type="inferred from homology"/>
<reference key="1">
    <citation type="journal article" date="2004" name="Nucleic Acids Res.">
        <title>Whole genome comparisons of serotype 4b and 1/2a strains of the food-borne pathogen Listeria monocytogenes reveal new insights into the core genome components of this species.</title>
        <authorList>
            <person name="Nelson K.E."/>
            <person name="Fouts D.E."/>
            <person name="Mongodin E.F."/>
            <person name="Ravel J."/>
            <person name="DeBoy R.T."/>
            <person name="Kolonay J.F."/>
            <person name="Rasko D.A."/>
            <person name="Angiuoli S.V."/>
            <person name="Gill S.R."/>
            <person name="Paulsen I.T."/>
            <person name="Peterson J.D."/>
            <person name="White O."/>
            <person name="Nelson W.C."/>
            <person name="Nierman W.C."/>
            <person name="Beanan M.J."/>
            <person name="Brinkac L.M."/>
            <person name="Daugherty S.C."/>
            <person name="Dodson R.J."/>
            <person name="Durkin A.S."/>
            <person name="Madupu R."/>
            <person name="Haft D.H."/>
            <person name="Selengut J."/>
            <person name="Van Aken S.E."/>
            <person name="Khouri H.M."/>
            <person name="Fedorova N."/>
            <person name="Forberger H.A."/>
            <person name="Tran B."/>
            <person name="Kathariou S."/>
            <person name="Wonderling L.D."/>
            <person name="Uhlich G.A."/>
            <person name="Bayles D.O."/>
            <person name="Luchansky J.B."/>
            <person name="Fraser C.M."/>
        </authorList>
    </citation>
    <scope>NUCLEOTIDE SEQUENCE [LARGE SCALE GENOMIC DNA]</scope>
    <source>
        <strain>F2365</strain>
    </source>
</reference>
<protein>
    <recommendedName>
        <fullName evidence="1">Putative agmatine deiminase 1</fullName>
        <ecNumber evidence="1">3.5.3.12</ecNumber>
    </recommendedName>
    <alternativeName>
        <fullName evidence="1">Agmatine iminohydrolase 1</fullName>
    </alternativeName>
</protein>
<dbReference type="EC" id="3.5.3.12" evidence="1"/>
<dbReference type="EMBL" id="AE017262">
    <property type="protein sequence ID" value="AAT02835.1"/>
    <property type="molecule type" value="Genomic_DNA"/>
</dbReference>
<dbReference type="SMR" id="Q725C6"/>
<dbReference type="KEGG" id="lmf:LMOf2365_0047"/>
<dbReference type="HOGENOM" id="CLU_037682_1_0_9"/>
<dbReference type="GO" id="GO:0047632">
    <property type="term" value="F:agmatine deiminase activity"/>
    <property type="evidence" value="ECO:0007669"/>
    <property type="project" value="UniProtKB-UniRule"/>
</dbReference>
<dbReference type="GO" id="GO:0004668">
    <property type="term" value="F:protein-arginine deiminase activity"/>
    <property type="evidence" value="ECO:0007669"/>
    <property type="project" value="InterPro"/>
</dbReference>
<dbReference type="GO" id="GO:0009446">
    <property type="term" value="P:putrescine biosynthetic process"/>
    <property type="evidence" value="ECO:0007669"/>
    <property type="project" value="InterPro"/>
</dbReference>
<dbReference type="Gene3D" id="3.75.10.10">
    <property type="entry name" value="L-arginine/glycine Amidinotransferase, Chain A"/>
    <property type="match status" value="1"/>
</dbReference>
<dbReference type="HAMAP" id="MF_01841">
    <property type="entry name" value="Agmatine_deimin"/>
    <property type="match status" value="1"/>
</dbReference>
<dbReference type="InterPro" id="IPR017754">
    <property type="entry name" value="Agmatine_deiminase"/>
</dbReference>
<dbReference type="InterPro" id="IPR007466">
    <property type="entry name" value="Peptidyl-Arg-deiminase_porph"/>
</dbReference>
<dbReference type="NCBIfam" id="TIGR03380">
    <property type="entry name" value="agmatine_aguA"/>
    <property type="match status" value="1"/>
</dbReference>
<dbReference type="NCBIfam" id="NF010070">
    <property type="entry name" value="PRK13551.1"/>
    <property type="match status" value="1"/>
</dbReference>
<dbReference type="PANTHER" id="PTHR31377">
    <property type="entry name" value="AGMATINE DEIMINASE-RELATED"/>
    <property type="match status" value="1"/>
</dbReference>
<dbReference type="PANTHER" id="PTHR31377:SF0">
    <property type="entry name" value="AGMATINE DEIMINASE-RELATED"/>
    <property type="match status" value="1"/>
</dbReference>
<dbReference type="Pfam" id="PF04371">
    <property type="entry name" value="PAD_porph"/>
    <property type="match status" value="1"/>
</dbReference>
<dbReference type="SUPFAM" id="SSF55909">
    <property type="entry name" value="Pentein"/>
    <property type="match status" value="1"/>
</dbReference>
<gene>
    <name evidence="1" type="primary">aguA1</name>
    <name type="ordered locus">LMOf2365_0047</name>
</gene>
<organism>
    <name type="scientific">Listeria monocytogenes serotype 4b (strain F2365)</name>
    <dbReference type="NCBI Taxonomy" id="265669"/>
    <lineage>
        <taxon>Bacteria</taxon>
        <taxon>Bacillati</taxon>
        <taxon>Bacillota</taxon>
        <taxon>Bacilli</taxon>
        <taxon>Bacillales</taxon>
        <taxon>Listeriaceae</taxon>
        <taxon>Listeria</taxon>
    </lineage>
</organism>
<comment type="catalytic activity">
    <reaction evidence="1">
        <text>agmatine + H2O = N-carbamoylputrescine + NH4(+)</text>
        <dbReference type="Rhea" id="RHEA:18037"/>
        <dbReference type="ChEBI" id="CHEBI:15377"/>
        <dbReference type="ChEBI" id="CHEBI:28938"/>
        <dbReference type="ChEBI" id="CHEBI:58145"/>
        <dbReference type="ChEBI" id="CHEBI:58318"/>
        <dbReference type="EC" id="3.5.3.12"/>
    </reaction>
</comment>
<comment type="similarity">
    <text evidence="1">Belongs to the agmatine deiminase family.</text>
</comment>
<evidence type="ECO:0000255" key="1">
    <source>
        <dbReference type="HAMAP-Rule" id="MF_01841"/>
    </source>
</evidence>
<feature type="chain" id="PRO_0000194331" description="Putative agmatine deiminase 1">
    <location>
        <begin position="1"/>
        <end position="364"/>
    </location>
</feature>
<feature type="active site" description="Amidino-cysteine intermediate" evidence="1">
    <location>
        <position position="356"/>
    </location>
</feature>
<accession>Q725C6</accession>